<sequence length="195" mass="21815">MATTISAVILAGGQAKRMAGLDKGLQLLQGKPLYQHCLQRLTNQVSSISINANRHQAIYQQSGVEVFGDELEDFQGPLSGILTALERANTDFVLFVPCDSPFLPLNLCEKLQSAVENSKSLLAYANDGEREHPAFSLLSTQLKLPLRVYLQSGHRQMLQFFRQHKAISVDFSLQKQAFVNMNTLQDIEKYQNIYA</sequence>
<evidence type="ECO:0000255" key="1">
    <source>
        <dbReference type="HAMAP-Rule" id="MF_00316"/>
    </source>
</evidence>
<protein>
    <recommendedName>
        <fullName evidence="1">Molybdenum cofactor guanylyltransferase</fullName>
        <shortName evidence="1">MoCo guanylyltransferase</shortName>
        <ecNumber evidence="1">2.7.7.77</ecNumber>
    </recommendedName>
    <alternativeName>
        <fullName evidence="1">GTP:molybdopterin guanylyltransferase</fullName>
    </alternativeName>
    <alternativeName>
        <fullName evidence="1">Mo-MPT guanylyltransferase</fullName>
    </alternativeName>
    <alternativeName>
        <fullName evidence="1">Molybdopterin guanylyltransferase</fullName>
    </alternativeName>
    <alternativeName>
        <fullName evidence="1">Molybdopterin-guanine dinucleotide synthase</fullName>
        <shortName evidence="1">MGD synthase</shortName>
    </alternativeName>
</protein>
<comment type="function">
    <text evidence="1">Transfers a GMP moiety from GTP to Mo-molybdopterin (Mo-MPT) cofactor (Moco or molybdenum cofactor) to form Mo-molybdopterin guanine dinucleotide (Mo-MGD) cofactor.</text>
</comment>
<comment type="catalytic activity">
    <reaction evidence="1">
        <text>Mo-molybdopterin + GTP + H(+) = Mo-molybdopterin guanine dinucleotide + diphosphate</text>
        <dbReference type="Rhea" id="RHEA:34243"/>
        <dbReference type="ChEBI" id="CHEBI:15378"/>
        <dbReference type="ChEBI" id="CHEBI:33019"/>
        <dbReference type="ChEBI" id="CHEBI:37565"/>
        <dbReference type="ChEBI" id="CHEBI:71302"/>
        <dbReference type="ChEBI" id="CHEBI:71310"/>
        <dbReference type="EC" id="2.7.7.77"/>
    </reaction>
</comment>
<comment type="cofactor">
    <cofactor evidence="1">
        <name>Mg(2+)</name>
        <dbReference type="ChEBI" id="CHEBI:18420"/>
    </cofactor>
</comment>
<comment type="subunit">
    <text evidence="1">Monomer.</text>
</comment>
<comment type="subcellular location">
    <subcellularLocation>
        <location evidence="1">Cytoplasm</location>
    </subcellularLocation>
</comment>
<comment type="domain">
    <text evidence="1">The N-terminal domain determines nucleotide recognition and specific binding, while the C-terminal domain determines the specific binding to the target protein.</text>
</comment>
<comment type="similarity">
    <text evidence="1">Belongs to the MobA family.</text>
</comment>
<keyword id="KW-0963">Cytoplasm</keyword>
<keyword id="KW-0342">GTP-binding</keyword>
<keyword id="KW-0460">Magnesium</keyword>
<keyword id="KW-0479">Metal-binding</keyword>
<keyword id="KW-0501">Molybdenum cofactor biosynthesis</keyword>
<keyword id="KW-0547">Nucleotide-binding</keyword>
<keyword id="KW-0808">Transferase</keyword>
<organism>
    <name type="scientific">Histophilus somni (strain 2336)</name>
    <name type="common">Haemophilus somnus</name>
    <dbReference type="NCBI Taxonomy" id="228400"/>
    <lineage>
        <taxon>Bacteria</taxon>
        <taxon>Pseudomonadati</taxon>
        <taxon>Pseudomonadota</taxon>
        <taxon>Gammaproteobacteria</taxon>
        <taxon>Pasteurellales</taxon>
        <taxon>Pasteurellaceae</taxon>
        <taxon>Histophilus</taxon>
    </lineage>
</organism>
<reference key="1">
    <citation type="submission" date="2008-02" db="EMBL/GenBank/DDBJ databases">
        <title>Complete sequence of Haemophilus somnus 2336.</title>
        <authorList>
            <consortium name="US DOE Joint Genome Institute"/>
            <person name="Siddaramappa S."/>
            <person name="Duncan A.J."/>
            <person name="Challacombe J.F."/>
            <person name="Rainey D."/>
            <person name="Gillaspy A.F."/>
            <person name="Carson M."/>
            <person name="Gipson J."/>
            <person name="Gipson M."/>
            <person name="Bruce D."/>
            <person name="Detter J.C."/>
            <person name="Han C.S."/>
            <person name="Land M."/>
            <person name="Tapia R."/>
            <person name="Thompson L.S."/>
            <person name="Orvis J."/>
            <person name="Zaitshik J."/>
            <person name="Barnes G."/>
            <person name="Brettin T.S."/>
            <person name="Dyer D.W."/>
            <person name="Inzana T.J."/>
        </authorList>
    </citation>
    <scope>NUCLEOTIDE SEQUENCE [LARGE SCALE GENOMIC DNA]</scope>
    <source>
        <strain>2336</strain>
    </source>
</reference>
<gene>
    <name evidence="1" type="primary">mobA</name>
    <name type="ordered locus">HSM_0182</name>
</gene>
<accession>B0UVP3</accession>
<name>MOBA_HISS2</name>
<dbReference type="EC" id="2.7.7.77" evidence="1"/>
<dbReference type="EMBL" id="CP000947">
    <property type="protein sequence ID" value="ACA31607.1"/>
    <property type="molecule type" value="Genomic_DNA"/>
</dbReference>
<dbReference type="RefSeq" id="WP_012340917.1">
    <property type="nucleotide sequence ID" value="NC_010519.1"/>
</dbReference>
<dbReference type="SMR" id="B0UVP3"/>
<dbReference type="STRING" id="228400.HSM_0182"/>
<dbReference type="GeneID" id="31486460"/>
<dbReference type="KEGG" id="hsm:HSM_0182"/>
<dbReference type="HOGENOM" id="CLU_055597_5_1_6"/>
<dbReference type="GO" id="GO:0005737">
    <property type="term" value="C:cytoplasm"/>
    <property type="evidence" value="ECO:0007669"/>
    <property type="project" value="UniProtKB-SubCell"/>
</dbReference>
<dbReference type="GO" id="GO:0005525">
    <property type="term" value="F:GTP binding"/>
    <property type="evidence" value="ECO:0007669"/>
    <property type="project" value="UniProtKB-UniRule"/>
</dbReference>
<dbReference type="GO" id="GO:0046872">
    <property type="term" value="F:metal ion binding"/>
    <property type="evidence" value="ECO:0007669"/>
    <property type="project" value="UniProtKB-KW"/>
</dbReference>
<dbReference type="GO" id="GO:0061603">
    <property type="term" value="F:molybdenum cofactor guanylyltransferase activity"/>
    <property type="evidence" value="ECO:0007669"/>
    <property type="project" value="UniProtKB-EC"/>
</dbReference>
<dbReference type="GO" id="GO:1902758">
    <property type="term" value="P:bis(molybdopterin guanine dinucleotide)molybdenum biosynthetic process"/>
    <property type="evidence" value="ECO:0007669"/>
    <property type="project" value="TreeGrafter"/>
</dbReference>
<dbReference type="CDD" id="cd02503">
    <property type="entry name" value="MobA"/>
    <property type="match status" value="1"/>
</dbReference>
<dbReference type="Gene3D" id="3.90.550.10">
    <property type="entry name" value="Spore Coat Polysaccharide Biosynthesis Protein SpsA, Chain A"/>
    <property type="match status" value="1"/>
</dbReference>
<dbReference type="HAMAP" id="MF_00316">
    <property type="entry name" value="MobA"/>
    <property type="match status" value="1"/>
</dbReference>
<dbReference type="InterPro" id="IPR025877">
    <property type="entry name" value="MobA-like_NTP_Trfase"/>
</dbReference>
<dbReference type="InterPro" id="IPR013482">
    <property type="entry name" value="Molybde_CF_guanTrfase"/>
</dbReference>
<dbReference type="InterPro" id="IPR029044">
    <property type="entry name" value="Nucleotide-diphossugar_trans"/>
</dbReference>
<dbReference type="NCBIfam" id="TIGR02665">
    <property type="entry name" value="molyb_mobA"/>
    <property type="match status" value="1"/>
</dbReference>
<dbReference type="PANTHER" id="PTHR19136">
    <property type="entry name" value="MOLYBDENUM COFACTOR GUANYLYLTRANSFERASE"/>
    <property type="match status" value="1"/>
</dbReference>
<dbReference type="PANTHER" id="PTHR19136:SF81">
    <property type="entry name" value="MOLYBDENUM COFACTOR GUANYLYLTRANSFERASE"/>
    <property type="match status" value="1"/>
</dbReference>
<dbReference type="Pfam" id="PF12804">
    <property type="entry name" value="NTP_transf_3"/>
    <property type="match status" value="1"/>
</dbReference>
<dbReference type="SUPFAM" id="SSF53448">
    <property type="entry name" value="Nucleotide-diphospho-sugar transferases"/>
    <property type="match status" value="1"/>
</dbReference>
<proteinExistence type="inferred from homology"/>
<feature type="chain" id="PRO_1000079109" description="Molybdenum cofactor guanylyltransferase">
    <location>
        <begin position="1"/>
        <end position="195"/>
    </location>
</feature>
<feature type="binding site" evidence="1">
    <location>
        <begin position="10"/>
        <end position="12"/>
    </location>
    <ligand>
        <name>GTP</name>
        <dbReference type="ChEBI" id="CHEBI:37565"/>
    </ligand>
</feature>
<feature type="binding site" evidence="1">
    <location>
        <position position="23"/>
    </location>
    <ligand>
        <name>GTP</name>
        <dbReference type="ChEBI" id="CHEBI:37565"/>
    </ligand>
</feature>
<feature type="binding site" evidence="1">
    <location>
        <position position="51"/>
    </location>
    <ligand>
        <name>GTP</name>
        <dbReference type="ChEBI" id="CHEBI:37565"/>
    </ligand>
</feature>
<feature type="binding site" evidence="1">
    <location>
        <position position="69"/>
    </location>
    <ligand>
        <name>GTP</name>
        <dbReference type="ChEBI" id="CHEBI:37565"/>
    </ligand>
</feature>
<feature type="binding site" evidence="1">
    <location>
        <position position="99"/>
    </location>
    <ligand>
        <name>GTP</name>
        <dbReference type="ChEBI" id="CHEBI:37565"/>
    </ligand>
</feature>
<feature type="binding site" evidence="1">
    <location>
        <position position="99"/>
    </location>
    <ligand>
        <name>Mg(2+)</name>
        <dbReference type="ChEBI" id="CHEBI:18420"/>
    </ligand>
</feature>